<proteinExistence type="inferred from homology"/>
<gene>
    <name evidence="1" type="primary">psaJ</name>
    <name type="ordered locus">Poptr_cp043</name>
</gene>
<accession>A4GYT1</accession>
<geneLocation type="chloroplast"/>
<organism>
    <name type="scientific">Populus trichocarpa</name>
    <name type="common">Western balsam poplar</name>
    <name type="synonym">Populus balsamifera subsp. trichocarpa</name>
    <dbReference type="NCBI Taxonomy" id="3694"/>
    <lineage>
        <taxon>Eukaryota</taxon>
        <taxon>Viridiplantae</taxon>
        <taxon>Streptophyta</taxon>
        <taxon>Embryophyta</taxon>
        <taxon>Tracheophyta</taxon>
        <taxon>Spermatophyta</taxon>
        <taxon>Magnoliopsida</taxon>
        <taxon>eudicotyledons</taxon>
        <taxon>Gunneridae</taxon>
        <taxon>Pentapetalae</taxon>
        <taxon>rosids</taxon>
        <taxon>fabids</taxon>
        <taxon>Malpighiales</taxon>
        <taxon>Salicaceae</taxon>
        <taxon>Saliceae</taxon>
        <taxon>Populus</taxon>
    </lineage>
</organism>
<evidence type="ECO:0000255" key="1">
    <source>
        <dbReference type="HAMAP-Rule" id="MF_00522"/>
    </source>
</evidence>
<name>PSAJ_POPTR</name>
<sequence>MRDLKTYLSVAPVISTLWFGSLAGLLIEINRFFPDALTFPFFSF</sequence>
<feature type="chain" id="PRO_0000354169" description="Photosystem I reaction center subunit IX">
    <location>
        <begin position="1"/>
        <end position="44"/>
    </location>
</feature>
<feature type="transmembrane region" description="Helical" evidence="1">
    <location>
        <begin position="7"/>
        <end position="27"/>
    </location>
</feature>
<dbReference type="EMBL" id="EF489041">
    <property type="protein sequence ID" value="ABO36725.1"/>
    <property type="molecule type" value="Genomic_DNA"/>
</dbReference>
<dbReference type="RefSeq" id="YP_001109522.1">
    <property type="nucleotide sequence ID" value="NC_009143.1"/>
</dbReference>
<dbReference type="SMR" id="A4GYT1"/>
<dbReference type="FunCoup" id="A4GYT1">
    <property type="interactions" value="43"/>
</dbReference>
<dbReference type="STRING" id="3694.A4GYT1"/>
<dbReference type="GeneID" id="4929692"/>
<dbReference type="KEGG" id="pop:4929692"/>
<dbReference type="InParanoid" id="A4GYT1"/>
<dbReference type="OrthoDB" id="1844838at2759"/>
<dbReference type="Proteomes" id="UP000006729">
    <property type="component" value="Chloroplast"/>
</dbReference>
<dbReference type="GO" id="GO:0009535">
    <property type="term" value="C:chloroplast thylakoid membrane"/>
    <property type="evidence" value="ECO:0007669"/>
    <property type="project" value="UniProtKB-SubCell"/>
</dbReference>
<dbReference type="GO" id="GO:0009522">
    <property type="term" value="C:photosystem I"/>
    <property type="evidence" value="ECO:0007669"/>
    <property type="project" value="UniProtKB-KW"/>
</dbReference>
<dbReference type="GO" id="GO:0015979">
    <property type="term" value="P:photosynthesis"/>
    <property type="evidence" value="ECO:0007669"/>
    <property type="project" value="UniProtKB-UniRule"/>
</dbReference>
<dbReference type="FunFam" id="1.20.5.510:FF:000001">
    <property type="entry name" value="Photosystem I reaction center subunit IX"/>
    <property type="match status" value="1"/>
</dbReference>
<dbReference type="Gene3D" id="1.20.5.510">
    <property type="entry name" value="Single helix bin"/>
    <property type="match status" value="1"/>
</dbReference>
<dbReference type="HAMAP" id="MF_00522">
    <property type="entry name" value="PSI_PsaJ"/>
    <property type="match status" value="1"/>
</dbReference>
<dbReference type="InterPro" id="IPR002615">
    <property type="entry name" value="PSI_PsaJ"/>
</dbReference>
<dbReference type="InterPro" id="IPR036062">
    <property type="entry name" value="PSI_PsaJ_sf"/>
</dbReference>
<dbReference type="PANTHER" id="PTHR36082">
    <property type="match status" value="1"/>
</dbReference>
<dbReference type="PANTHER" id="PTHR36082:SF2">
    <property type="entry name" value="PHOTOSYSTEM I REACTION CENTER SUBUNIT IX"/>
    <property type="match status" value="1"/>
</dbReference>
<dbReference type="Pfam" id="PF01701">
    <property type="entry name" value="PSI_PsaJ"/>
    <property type="match status" value="1"/>
</dbReference>
<dbReference type="SUPFAM" id="SSF81544">
    <property type="entry name" value="Subunit IX of photosystem I reaction centre, PsaJ"/>
    <property type="match status" value="1"/>
</dbReference>
<comment type="function">
    <text evidence="1">May help in the organization of the PsaE and PsaF subunits.</text>
</comment>
<comment type="subcellular location">
    <subcellularLocation>
        <location evidence="1">Plastid</location>
        <location evidence="1">Chloroplast thylakoid membrane</location>
        <topology evidence="1">Single-pass membrane protein</topology>
    </subcellularLocation>
</comment>
<comment type="similarity">
    <text evidence="1">Belongs to the PsaJ family.</text>
</comment>
<protein>
    <recommendedName>
        <fullName evidence="1">Photosystem I reaction center subunit IX</fullName>
    </recommendedName>
    <alternativeName>
        <fullName evidence="1">PSI-J</fullName>
    </alternativeName>
</protein>
<reference key="1">
    <citation type="journal article" date="2006" name="Science">
        <title>The genome of black cottonwood, Populus trichocarpa (Torr. &amp; Gray).</title>
        <authorList>
            <person name="Tuskan G.A."/>
            <person name="Difazio S."/>
            <person name="Jansson S."/>
            <person name="Bohlmann J."/>
            <person name="Grigoriev I."/>
            <person name="Hellsten U."/>
            <person name="Putnam N."/>
            <person name="Ralph S."/>
            <person name="Rombauts S."/>
            <person name="Salamov A."/>
            <person name="Schein J."/>
            <person name="Sterck L."/>
            <person name="Aerts A."/>
            <person name="Bhalerao R.R."/>
            <person name="Bhalerao R.P."/>
            <person name="Blaudez D."/>
            <person name="Boerjan W."/>
            <person name="Brun A."/>
            <person name="Brunner A."/>
            <person name="Busov V."/>
            <person name="Campbell M."/>
            <person name="Carlson J."/>
            <person name="Chalot M."/>
            <person name="Chapman J."/>
            <person name="Chen G.-L."/>
            <person name="Cooper D."/>
            <person name="Coutinho P.M."/>
            <person name="Couturier J."/>
            <person name="Covert S."/>
            <person name="Cronk Q."/>
            <person name="Cunningham R."/>
            <person name="Davis J."/>
            <person name="Degroeve S."/>
            <person name="Dejardin A."/>
            <person name="dePamphilis C.W."/>
            <person name="Detter J."/>
            <person name="Dirks B."/>
            <person name="Dubchak I."/>
            <person name="Duplessis S."/>
            <person name="Ehlting J."/>
            <person name="Ellis B."/>
            <person name="Gendler K."/>
            <person name="Goodstein D."/>
            <person name="Gribskov M."/>
            <person name="Grimwood J."/>
            <person name="Groover A."/>
            <person name="Gunter L."/>
            <person name="Hamberger B."/>
            <person name="Heinze B."/>
            <person name="Helariutta Y."/>
            <person name="Henrissat B."/>
            <person name="Holligan D."/>
            <person name="Holt R."/>
            <person name="Huang W."/>
            <person name="Islam-Faridi N."/>
            <person name="Jones S."/>
            <person name="Jones-Rhoades M."/>
            <person name="Jorgensen R."/>
            <person name="Joshi C."/>
            <person name="Kangasjaervi J."/>
            <person name="Karlsson J."/>
            <person name="Kelleher C."/>
            <person name="Kirkpatrick R."/>
            <person name="Kirst M."/>
            <person name="Kohler A."/>
            <person name="Kalluri U."/>
            <person name="Larimer F."/>
            <person name="Leebens-Mack J."/>
            <person name="Leple J.-C."/>
            <person name="Locascio P."/>
            <person name="Lou Y."/>
            <person name="Lucas S."/>
            <person name="Martin F."/>
            <person name="Montanini B."/>
            <person name="Napoli C."/>
            <person name="Nelson D.R."/>
            <person name="Nelson C."/>
            <person name="Nieminen K."/>
            <person name="Nilsson O."/>
            <person name="Pereda V."/>
            <person name="Peter G."/>
            <person name="Philippe R."/>
            <person name="Pilate G."/>
            <person name="Poliakov A."/>
            <person name="Razumovskaya J."/>
            <person name="Richardson P."/>
            <person name="Rinaldi C."/>
            <person name="Ritland K."/>
            <person name="Rouze P."/>
            <person name="Ryaboy D."/>
            <person name="Schmutz J."/>
            <person name="Schrader J."/>
            <person name="Segerman B."/>
            <person name="Shin H."/>
            <person name="Siddiqui A."/>
            <person name="Sterky F."/>
            <person name="Terry A."/>
            <person name="Tsai C.-J."/>
            <person name="Uberbacher E."/>
            <person name="Unneberg P."/>
            <person name="Vahala J."/>
            <person name="Wall K."/>
            <person name="Wessler S."/>
            <person name="Yang G."/>
            <person name="Yin T."/>
            <person name="Douglas C."/>
            <person name="Marra M."/>
            <person name="Sandberg G."/>
            <person name="Van de Peer Y."/>
            <person name="Rokhsar D.S."/>
        </authorList>
    </citation>
    <scope>NUCLEOTIDE SEQUENCE [LARGE SCALE GENOMIC DNA]</scope>
    <source>
        <strain>cv. Nisqually</strain>
    </source>
</reference>
<keyword id="KW-0150">Chloroplast</keyword>
<keyword id="KW-0472">Membrane</keyword>
<keyword id="KW-0602">Photosynthesis</keyword>
<keyword id="KW-0603">Photosystem I</keyword>
<keyword id="KW-0934">Plastid</keyword>
<keyword id="KW-1185">Reference proteome</keyword>
<keyword id="KW-0793">Thylakoid</keyword>
<keyword id="KW-0812">Transmembrane</keyword>
<keyword id="KW-1133">Transmembrane helix</keyword>